<sequence>MSAAPAYSEDKGGSAGPGEPEYGHDPASGGIFSSDYKRHDDLKEMLDTNKDSLKLEAMKRIVAMIARGKNASDLFPAVVKNVACKNIEVKKLVYVYLVRYAEEQQDLALLSISTFQRGLKDPNQLIRASALRVLSSIRVPIIVPIMMLAIKEAASDMSPYVRKTAAHAIPKLYSLDSDQKDQLIEVIEKLLADKTTLVAGSVVMAFEEVCPERIDLIHKNYRKLCNLLIDVEEWGQVVIISMLTRYARTQFLSPTQNESLLEENPEKAFYGSEEDEAKGPGSEEAATAALPARKPYVMDPDHRLLLRNTKPLLQSRSAAVVMAVAQLYFHLAPKAEVGVIAKALVRLLRSHSEVQYVVLQNVATMSIKRRGMFEPYLKSFYIRSTDPTQIKILKLEVLTNLANETNIPTVLREFQTYIRSMDKDFVAATIQAIGRCATNIGRVRDTCLNGLVQLLSNRDELVVAESVVVIKKLLQMQPAQHGEIIKHLAKLTDNIQVPMARASILWLIGEYCEHVPKIAPDVLRKMAKSFTAEEDIVKLQVINLAAKLYLTNSKQTKLLTQYVLSLAKYDQNYDIRDRARFTRQLIVPSEQGGALSRHAKKLFLAPKPAPILESSFKDRDHFQLGSLSHLLNAKATGYQELPDWPEEAPDPSVRNVEVPEWTKCSNREKRKEKEKPFYSDSEGESGPTESADSEPESESESESKSSSGSGSGESSSESDNEEEDEEKGGGSESEQSEEEDEKKKKTKKKKASEGHREGSSSEEGSDSSSSSESEVTSESEEEQVEPASWRKKTPPGSKSAPVAKEISLLDLEDFTPPSVQPVSPPMVVSTSLAADLEGLTLTDSSLVPSLLSPVSSIGRQELLHRVAGEGLSVDYAFSRQPFSGDPHMVSLHIYFSNNSETPIKGLHVGTPKLPAGISIQEFPEIESLAPGESTTTVMGINFCDSTQAANFQLCTQTRQFYVSIQPPVGELMAPVFMSENEFKKEQGKLTGMNEITEKLTLPDTCRSDHMVVQKVTATANLGRVPCGTSDEYRFAGRTLTSGSLVLLTLDARAAGAAQLTVNSEKMVIGTMLVKDVIQALTQ</sequence>
<feature type="chain" id="PRO_0000193749" description="AP-3 complex subunit beta-2">
    <location>
        <begin position="1"/>
        <end position="1082"/>
    </location>
</feature>
<feature type="region of interest" description="Disordered" evidence="2">
    <location>
        <begin position="1"/>
        <end position="30"/>
    </location>
</feature>
<feature type="region of interest" description="Disordered" evidence="2">
    <location>
        <begin position="666"/>
        <end position="801"/>
    </location>
</feature>
<feature type="compositionally biased region" description="Basic and acidic residues" evidence="2">
    <location>
        <begin position="666"/>
        <end position="677"/>
    </location>
</feature>
<feature type="compositionally biased region" description="Acidic residues" evidence="2">
    <location>
        <begin position="691"/>
        <end position="700"/>
    </location>
</feature>
<feature type="compositionally biased region" description="Low complexity" evidence="2">
    <location>
        <begin position="704"/>
        <end position="715"/>
    </location>
</feature>
<feature type="compositionally biased region" description="Acidic residues" evidence="2">
    <location>
        <begin position="716"/>
        <end position="726"/>
    </location>
</feature>
<feature type="compositionally biased region" description="Acidic residues" evidence="2">
    <location>
        <begin position="775"/>
        <end position="784"/>
    </location>
</feature>
<feature type="modified residue" description="Phosphoserine" evidence="5">
    <location>
        <position position="272"/>
    </location>
</feature>
<feature type="modified residue" description="Phosphoserine" evidence="5">
    <location>
        <position position="282"/>
    </location>
</feature>
<feature type="sequence conflict" description="In Ref. 4; BAA92765." evidence="4" ref="4">
    <original>E</original>
    <variation>D</variation>
    <location>
        <position position="734"/>
    </location>
</feature>
<evidence type="ECO:0000250" key="1"/>
<evidence type="ECO:0000256" key="2">
    <source>
        <dbReference type="SAM" id="MobiDB-lite"/>
    </source>
</evidence>
<evidence type="ECO:0000269" key="3">
    <source>
    </source>
</evidence>
<evidence type="ECO:0000305" key="4"/>
<evidence type="ECO:0007744" key="5">
    <source>
    </source>
</evidence>
<accession>Q9JME5</accession>
<accession>B2RTK2</accession>
<accession>Q3UYP8</accession>
<accession>Q6QR53</accession>
<accession>Q8R1E5</accession>
<organism>
    <name type="scientific">Mus musculus</name>
    <name type="common">Mouse</name>
    <dbReference type="NCBI Taxonomy" id="10090"/>
    <lineage>
        <taxon>Eukaryota</taxon>
        <taxon>Metazoa</taxon>
        <taxon>Chordata</taxon>
        <taxon>Craniata</taxon>
        <taxon>Vertebrata</taxon>
        <taxon>Euteleostomi</taxon>
        <taxon>Mammalia</taxon>
        <taxon>Eutheria</taxon>
        <taxon>Euarchontoglires</taxon>
        <taxon>Glires</taxon>
        <taxon>Rodentia</taxon>
        <taxon>Myomorpha</taxon>
        <taxon>Muroidea</taxon>
        <taxon>Muridae</taxon>
        <taxon>Murinae</taxon>
        <taxon>Mus</taxon>
        <taxon>Mus</taxon>
    </lineage>
</organism>
<keyword id="KW-0968">Cytoplasmic vesicle</keyword>
<keyword id="KW-0333">Golgi apparatus</keyword>
<keyword id="KW-0472">Membrane</keyword>
<keyword id="KW-0597">Phosphoprotein</keyword>
<keyword id="KW-0653">Protein transport</keyword>
<keyword id="KW-1185">Reference proteome</keyword>
<keyword id="KW-0813">Transport</keyword>
<reference key="1">
    <citation type="submission" date="2004-01" db="EMBL/GenBank/DDBJ databases">
        <title>Ap3b2, a neuron specific subunit of adaptor protein complex 3 (AP-3).</title>
        <authorList>
            <person name="Seong E."/>
            <person name="Burmeister M."/>
        </authorList>
    </citation>
    <scope>NUCLEOTIDE SEQUENCE [MRNA]</scope>
    <source>
        <strain>C57BL/6J</strain>
    </source>
</reference>
<reference key="2">
    <citation type="journal article" date="2004" name="Genome Res.">
        <title>The status, quality, and expansion of the NIH full-length cDNA project: the Mammalian Gene Collection (MGC).</title>
        <authorList>
            <consortium name="The MGC Project Team"/>
        </authorList>
    </citation>
    <scope>NUCLEOTIDE SEQUENCE [LARGE SCALE MRNA]</scope>
</reference>
<reference key="3">
    <citation type="journal article" date="2005" name="Science">
        <title>The transcriptional landscape of the mammalian genome.</title>
        <authorList>
            <person name="Carninci P."/>
            <person name="Kasukawa T."/>
            <person name="Katayama S."/>
            <person name="Gough J."/>
            <person name="Frith M.C."/>
            <person name="Maeda N."/>
            <person name="Oyama R."/>
            <person name="Ravasi T."/>
            <person name="Lenhard B."/>
            <person name="Wells C."/>
            <person name="Kodzius R."/>
            <person name="Shimokawa K."/>
            <person name="Bajic V.B."/>
            <person name="Brenner S.E."/>
            <person name="Batalov S."/>
            <person name="Forrest A.R."/>
            <person name="Zavolan M."/>
            <person name="Davis M.J."/>
            <person name="Wilming L.G."/>
            <person name="Aidinis V."/>
            <person name="Allen J.E."/>
            <person name="Ambesi-Impiombato A."/>
            <person name="Apweiler R."/>
            <person name="Aturaliya R.N."/>
            <person name="Bailey T.L."/>
            <person name="Bansal M."/>
            <person name="Baxter L."/>
            <person name="Beisel K.W."/>
            <person name="Bersano T."/>
            <person name="Bono H."/>
            <person name="Chalk A.M."/>
            <person name="Chiu K.P."/>
            <person name="Choudhary V."/>
            <person name="Christoffels A."/>
            <person name="Clutterbuck D.R."/>
            <person name="Crowe M.L."/>
            <person name="Dalla E."/>
            <person name="Dalrymple B.P."/>
            <person name="de Bono B."/>
            <person name="Della Gatta G."/>
            <person name="di Bernardo D."/>
            <person name="Down T."/>
            <person name="Engstrom P."/>
            <person name="Fagiolini M."/>
            <person name="Faulkner G."/>
            <person name="Fletcher C.F."/>
            <person name="Fukushima T."/>
            <person name="Furuno M."/>
            <person name="Futaki S."/>
            <person name="Gariboldi M."/>
            <person name="Georgii-Hemming P."/>
            <person name="Gingeras T.R."/>
            <person name="Gojobori T."/>
            <person name="Green R.E."/>
            <person name="Gustincich S."/>
            <person name="Harbers M."/>
            <person name="Hayashi Y."/>
            <person name="Hensch T.K."/>
            <person name="Hirokawa N."/>
            <person name="Hill D."/>
            <person name="Huminiecki L."/>
            <person name="Iacono M."/>
            <person name="Ikeo K."/>
            <person name="Iwama A."/>
            <person name="Ishikawa T."/>
            <person name="Jakt M."/>
            <person name="Kanapin A."/>
            <person name="Katoh M."/>
            <person name="Kawasawa Y."/>
            <person name="Kelso J."/>
            <person name="Kitamura H."/>
            <person name="Kitano H."/>
            <person name="Kollias G."/>
            <person name="Krishnan S.P."/>
            <person name="Kruger A."/>
            <person name="Kummerfeld S.K."/>
            <person name="Kurochkin I.V."/>
            <person name="Lareau L.F."/>
            <person name="Lazarevic D."/>
            <person name="Lipovich L."/>
            <person name="Liu J."/>
            <person name="Liuni S."/>
            <person name="McWilliam S."/>
            <person name="Madan Babu M."/>
            <person name="Madera M."/>
            <person name="Marchionni L."/>
            <person name="Matsuda H."/>
            <person name="Matsuzawa S."/>
            <person name="Miki H."/>
            <person name="Mignone F."/>
            <person name="Miyake S."/>
            <person name="Morris K."/>
            <person name="Mottagui-Tabar S."/>
            <person name="Mulder N."/>
            <person name="Nakano N."/>
            <person name="Nakauchi H."/>
            <person name="Ng P."/>
            <person name="Nilsson R."/>
            <person name="Nishiguchi S."/>
            <person name="Nishikawa S."/>
            <person name="Nori F."/>
            <person name="Ohara O."/>
            <person name="Okazaki Y."/>
            <person name="Orlando V."/>
            <person name="Pang K.C."/>
            <person name="Pavan W.J."/>
            <person name="Pavesi G."/>
            <person name="Pesole G."/>
            <person name="Petrovsky N."/>
            <person name="Piazza S."/>
            <person name="Reed J."/>
            <person name="Reid J.F."/>
            <person name="Ring B.Z."/>
            <person name="Ringwald M."/>
            <person name="Rost B."/>
            <person name="Ruan Y."/>
            <person name="Salzberg S.L."/>
            <person name="Sandelin A."/>
            <person name="Schneider C."/>
            <person name="Schoenbach C."/>
            <person name="Sekiguchi K."/>
            <person name="Semple C.A."/>
            <person name="Seno S."/>
            <person name="Sessa L."/>
            <person name="Sheng Y."/>
            <person name="Shibata Y."/>
            <person name="Shimada H."/>
            <person name="Shimada K."/>
            <person name="Silva D."/>
            <person name="Sinclair B."/>
            <person name="Sperling S."/>
            <person name="Stupka E."/>
            <person name="Sugiura K."/>
            <person name="Sultana R."/>
            <person name="Takenaka Y."/>
            <person name="Taki K."/>
            <person name="Tammoja K."/>
            <person name="Tan S.L."/>
            <person name="Tang S."/>
            <person name="Taylor M.S."/>
            <person name="Tegner J."/>
            <person name="Teichmann S.A."/>
            <person name="Ueda H.R."/>
            <person name="van Nimwegen E."/>
            <person name="Verardo R."/>
            <person name="Wei C.L."/>
            <person name="Yagi K."/>
            <person name="Yamanishi H."/>
            <person name="Zabarovsky E."/>
            <person name="Zhu S."/>
            <person name="Zimmer A."/>
            <person name="Hide W."/>
            <person name="Bult C."/>
            <person name="Grimmond S.M."/>
            <person name="Teasdale R.D."/>
            <person name="Liu E.T."/>
            <person name="Brusic V."/>
            <person name="Quackenbush J."/>
            <person name="Wahlestedt C."/>
            <person name="Mattick J.S."/>
            <person name="Hume D.A."/>
            <person name="Kai C."/>
            <person name="Sasaki D."/>
            <person name="Tomaru Y."/>
            <person name="Fukuda S."/>
            <person name="Kanamori-Katayama M."/>
            <person name="Suzuki M."/>
            <person name="Aoki J."/>
            <person name="Arakawa T."/>
            <person name="Iida J."/>
            <person name="Imamura K."/>
            <person name="Itoh M."/>
            <person name="Kato T."/>
            <person name="Kawaji H."/>
            <person name="Kawagashira N."/>
            <person name="Kawashima T."/>
            <person name="Kojima M."/>
            <person name="Kondo S."/>
            <person name="Konno H."/>
            <person name="Nakano K."/>
            <person name="Ninomiya N."/>
            <person name="Nishio T."/>
            <person name="Okada M."/>
            <person name="Plessy C."/>
            <person name="Shibata K."/>
            <person name="Shiraki T."/>
            <person name="Suzuki S."/>
            <person name="Tagami M."/>
            <person name="Waki K."/>
            <person name="Watahiki A."/>
            <person name="Okamura-Oho Y."/>
            <person name="Suzuki H."/>
            <person name="Kawai J."/>
            <person name="Hayashizaki Y."/>
        </authorList>
    </citation>
    <scope>NUCLEOTIDE SEQUENCE [LARGE SCALE MRNA] OF 1-738</scope>
    <source>
        <strain>C57BL/6J</strain>
        <tissue>Embryonic head</tissue>
    </source>
</reference>
<reference key="4">
    <citation type="journal article" date="2000" name="Biochem. Biophys. Res. Commun.">
        <title>Growth suppression of Escherichia coli by induction of expression of mammalian genes with transmembrane or ATPase domains.</title>
        <authorList>
            <person name="Inoue S."/>
            <person name="Sano H."/>
            <person name="Ohta M."/>
        </authorList>
    </citation>
    <scope>NUCLEOTIDE SEQUENCE [MRNA] OF 608-1082</scope>
    <source>
        <tissue>Brain</tissue>
    </source>
</reference>
<reference key="5">
    <citation type="journal article" date="2007" name="Mol. Cell. Proteomics">
        <title>Qualitative and quantitative analyses of protein phosphorylation in naive and stimulated mouse synaptosomal preparations.</title>
        <authorList>
            <person name="Munton R.P."/>
            <person name="Tweedie-Cullen R."/>
            <person name="Livingstone-Zatchej M."/>
            <person name="Weinandy F."/>
            <person name="Waidelich M."/>
            <person name="Longo D."/>
            <person name="Gehrig P."/>
            <person name="Potthast F."/>
            <person name="Rutishauser D."/>
            <person name="Gerrits B."/>
            <person name="Panse C."/>
            <person name="Schlapbach R."/>
            <person name="Mansuy I.M."/>
        </authorList>
    </citation>
    <scope>IDENTIFICATION BY MASS SPECTROMETRY [LARGE SCALE ANALYSIS]</scope>
    <source>
        <tissue>Brain cortex</tissue>
    </source>
</reference>
<reference key="6">
    <citation type="journal article" date="2010" name="Cell">
        <title>A tissue-specific atlas of mouse protein phosphorylation and expression.</title>
        <authorList>
            <person name="Huttlin E.L."/>
            <person name="Jedrychowski M.P."/>
            <person name="Elias J.E."/>
            <person name="Goswami T."/>
            <person name="Rad R."/>
            <person name="Beausoleil S.A."/>
            <person name="Villen J."/>
            <person name="Haas W."/>
            <person name="Sowa M.E."/>
            <person name="Gygi S.P."/>
        </authorList>
    </citation>
    <scope>PHOSPHORYLATION [LARGE SCALE ANALYSIS] AT SER-272 AND SER-282</scope>
    <scope>IDENTIFICATION BY MASS SPECTROMETRY [LARGE SCALE ANALYSIS]</scope>
    <source>
        <tissue>Brain</tissue>
        <tissue>Brown adipose tissue</tissue>
        <tissue>Pancreas</tissue>
    </source>
</reference>
<reference key="7">
    <citation type="journal article" date="2011" name="Mol. Biol. Cell">
        <title>The schizophrenia susceptibility factor dysbindin and its associated complex sort cargoes from cell bodies to the synapse.</title>
        <authorList>
            <person name="Larimore J."/>
            <person name="Tornieri K."/>
            <person name="Ryder P.V."/>
            <person name="Gokhale A."/>
            <person name="Zlatic S.A."/>
            <person name="Craige B."/>
            <person name="Lee J.D."/>
            <person name="Talbot K."/>
            <person name="Pare J.F."/>
            <person name="Smith Y."/>
            <person name="Faundez V."/>
        </authorList>
    </citation>
    <scope>FUNCTION</scope>
    <scope>ASSOCIATION WITH THE BLOC-1 COMPLEX</scope>
</reference>
<proteinExistence type="evidence at protein level"/>
<name>AP3B2_MOUSE</name>
<gene>
    <name type="primary">Ap3b2</name>
</gene>
<comment type="function">
    <text evidence="3">Subunit of non-clathrin- and clathrin-associated adaptor protein complex 3 (AP-3) that plays a role in protein sorting in the late-Golgi/trans-Golgi network (TGN) and/or endosomes. The AP complexes mediate both the recruitment of clathrin to membranes and the recognition of sorting signals within the cytosolic tails of transmembrane cargo molecules. AP-3 appears to be involved in the sorting of a subset of transmembrane proteins targeted to lysosomes and lysosome-related organelles. In concert with the BLOC-1 complex, AP-3 is required to target cargos into vesicles assembled at cell bodies for delivery into neurites and nerve terminals.</text>
</comment>
<comment type="subunit">
    <text evidence="1">Adaptor protein complex 3 (AP-3) is a heterotetramer composed of two large adaptins (delta-type subunit AP3D1 and beta-type subunit AP3B1 or AP3B2), a medium adaptin (mu-type subunit AP3M1 or AP3M2) and a small adaptin (sigma-type subunit APS1 or AP3S2) (By similarity). AP-3 associates with the BLOC-1 complex.</text>
</comment>
<comment type="subcellular location">
    <subcellularLocation>
        <location evidence="1">Cytoplasmic vesicle</location>
        <location evidence="1">Clathrin-coated vesicle membrane</location>
        <topology evidence="1">Peripheral membrane protein</topology>
        <orientation evidence="1">Cytoplasmic side</orientation>
    </subcellularLocation>
    <subcellularLocation>
        <location evidence="1">Golgi apparatus</location>
    </subcellularLocation>
    <text evidence="1">Component of the coat surrounding the cytoplasmic face of coated vesicles located at the Golgi complex.</text>
</comment>
<comment type="similarity">
    <text evidence="4">Belongs to the adaptor complexes large subunit family.</text>
</comment>
<dbReference type="EMBL" id="AY528675">
    <property type="protein sequence ID" value="AAS18679.1"/>
    <property type="molecule type" value="mRNA"/>
</dbReference>
<dbReference type="EMBL" id="BC139378">
    <property type="protein sequence ID" value="AAI39379.1"/>
    <property type="molecule type" value="mRNA"/>
</dbReference>
<dbReference type="EMBL" id="BC139379">
    <property type="protein sequence ID" value="AAI39380.1"/>
    <property type="molecule type" value="mRNA"/>
</dbReference>
<dbReference type="EMBL" id="AK134504">
    <property type="protein sequence ID" value="BAE22164.1"/>
    <property type="molecule type" value="mRNA"/>
</dbReference>
<dbReference type="EMBL" id="AB030202">
    <property type="protein sequence ID" value="BAA92765.1"/>
    <property type="molecule type" value="mRNA"/>
</dbReference>
<dbReference type="CCDS" id="CCDS21403.1"/>
<dbReference type="RefSeq" id="NP_067467.2">
    <property type="nucleotide sequence ID" value="NM_021492.3"/>
</dbReference>
<dbReference type="SMR" id="Q9JME5"/>
<dbReference type="BioGRID" id="198133">
    <property type="interactions" value="13"/>
</dbReference>
<dbReference type="ComplexPortal" id="CPX-5147">
    <property type="entry name" value="Neuronal AP-3 Adaptor complex, sigma3a variant"/>
</dbReference>
<dbReference type="ComplexPortal" id="CPX-5148">
    <property type="entry name" value="Neuronal AP-3 Adaptor complex, sigma3b variant"/>
</dbReference>
<dbReference type="FunCoup" id="Q9JME5">
    <property type="interactions" value="1131"/>
</dbReference>
<dbReference type="IntAct" id="Q9JME5">
    <property type="interactions" value="4"/>
</dbReference>
<dbReference type="MINT" id="Q9JME5"/>
<dbReference type="STRING" id="10090.ENSMUSP00000080739"/>
<dbReference type="GlyGen" id="Q9JME5">
    <property type="glycosylation" value="3 sites, 1 N-linked glycan (1 site), 1 O-linked glycan (1 site)"/>
</dbReference>
<dbReference type="iPTMnet" id="Q9JME5"/>
<dbReference type="MetOSite" id="Q9JME5"/>
<dbReference type="PhosphoSitePlus" id="Q9JME5"/>
<dbReference type="SwissPalm" id="Q9JME5"/>
<dbReference type="jPOST" id="Q9JME5"/>
<dbReference type="PaxDb" id="10090-ENSMUSP00000080739"/>
<dbReference type="PeptideAtlas" id="Q9JME5"/>
<dbReference type="ProteomicsDB" id="281895"/>
<dbReference type="Antibodypedia" id="28110">
    <property type="antibodies" value="137 antibodies from 28 providers"/>
</dbReference>
<dbReference type="DNASU" id="11775"/>
<dbReference type="Ensembl" id="ENSMUST00000082090.15">
    <property type="protein sequence ID" value="ENSMUSP00000080739.8"/>
    <property type="gene ID" value="ENSMUSG00000062444.16"/>
</dbReference>
<dbReference type="GeneID" id="11775"/>
<dbReference type="KEGG" id="mmu:11775"/>
<dbReference type="UCSC" id="uc009iby.1">
    <property type="organism name" value="mouse"/>
</dbReference>
<dbReference type="AGR" id="MGI:1100869"/>
<dbReference type="CTD" id="8120"/>
<dbReference type="MGI" id="MGI:1100869">
    <property type="gene designation" value="Ap3b2"/>
</dbReference>
<dbReference type="VEuPathDB" id="HostDB:ENSMUSG00000062444"/>
<dbReference type="eggNOG" id="KOG1060">
    <property type="taxonomic scope" value="Eukaryota"/>
</dbReference>
<dbReference type="GeneTree" id="ENSGT00940000156817"/>
<dbReference type="HOGENOM" id="CLU_006320_3_1_1"/>
<dbReference type="InParanoid" id="Q9JME5"/>
<dbReference type="OMA" id="HFLVRST"/>
<dbReference type="OrthoDB" id="302453at2759"/>
<dbReference type="PhylomeDB" id="Q9JME5"/>
<dbReference type="TreeFam" id="TF314605"/>
<dbReference type="BioGRID-ORCS" id="11775">
    <property type="hits" value="3 hits in 78 CRISPR screens"/>
</dbReference>
<dbReference type="CD-CODE" id="CE726F99">
    <property type="entry name" value="Postsynaptic density"/>
</dbReference>
<dbReference type="ChiTaRS" id="Ap3b2">
    <property type="organism name" value="mouse"/>
</dbReference>
<dbReference type="PRO" id="PR:Q9JME5"/>
<dbReference type="Proteomes" id="UP000000589">
    <property type="component" value="Chromosome 7"/>
</dbReference>
<dbReference type="RNAct" id="Q9JME5">
    <property type="molecule type" value="protein"/>
</dbReference>
<dbReference type="Bgee" id="ENSMUSG00000062444">
    <property type="expression patterns" value="Expressed in dentate gyrus of hippocampal formation granule cell and 149 other cell types or tissues"/>
</dbReference>
<dbReference type="ExpressionAtlas" id="Q9JME5">
    <property type="expression patterns" value="baseline and differential"/>
</dbReference>
<dbReference type="GO" id="GO:0030123">
    <property type="term" value="C:AP-3 adaptor complex"/>
    <property type="evidence" value="ECO:0000303"/>
    <property type="project" value="ComplexPortal"/>
</dbReference>
<dbReference type="GO" id="GO:1904115">
    <property type="term" value="C:axon cytoplasm"/>
    <property type="evidence" value="ECO:0007669"/>
    <property type="project" value="GOC"/>
</dbReference>
<dbReference type="GO" id="GO:0030665">
    <property type="term" value="C:clathrin-coated vesicle membrane"/>
    <property type="evidence" value="ECO:0007669"/>
    <property type="project" value="UniProtKB-SubCell"/>
</dbReference>
<dbReference type="GO" id="GO:0005769">
    <property type="term" value="C:early endosome"/>
    <property type="evidence" value="ECO:0000303"/>
    <property type="project" value="ComplexPortal"/>
</dbReference>
<dbReference type="GO" id="GO:0098793">
    <property type="term" value="C:presynapse"/>
    <property type="evidence" value="ECO:0000314"/>
    <property type="project" value="SynGO"/>
</dbReference>
<dbReference type="GO" id="GO:0005802">
    <property type="term" value="C:trans-Golgi network"/>
    <property type="evidence" value="ECO:0000304"/>
    <property type="project" value="MGI"/>
</dbReference>
<dbReference type="GO" id="GO:0008089">
    <property type="term" value="P:anterograde axonal transport"/>
    <property type="evidence" value="ECO:0000315"/>
    <property type="project" value="UniProtKB"/>
</dbReference>
<dbReference type="GO" id="GO:0048490">
    <property type="term" value="P:anterograde synaptic vesicle transport"/>
    <property type="evidence" value="ECO:0000315"/>
    <property type="project" value="UniProtKB"/>
</dbReference>
<dbReference type="GO" id="GO:0035654">
    <property type="term" value="P:clathrin-coated vesicle cargo loading, AP-3-mediated"/>
    <property type="evidence" value="ECO:0000303"/>
    <property type="project" value="ComplexPortal"/>
</dbReference>
<dbReference type="GO" id="GO:0006886">
    <property type="term" value="P:intracellular protein transport"/>
    <property type="evidence" value="ECO:0000304"/>
    <property type="project" value="MGI"/>
</dbReference>
<dbReference type="GO" id="GO:0046907">
    <property type="term" value="P:intracellular transport"/>
    <property type="evidence" value="ECO:0000303"/>
    <property type="project" value="ComplexPortal"/>
</dbReference>
<dbReference type="GO" id="GO:0016183">
    <property type="term" value="P:synaptic vesicle coating"/>
    <property type="evidence" value="ECO:0000303"/>
    <property type="project" value="ComplexPortal"/>
</dbReference>
<dbReference type="GO" id="GO:0048488">
    <property type="term" value="P:synaptic vesicle endocytosis"/>
    <property type="evidence" value="ECO:0000314"/>
    <property type="project" value="SynGO"/>
</dbReference>
<dbReference type="GO" id="GO:0036465">
    <property type="term" value="P:synaptic vesicle recycling"/>
    <property type="evidence" value="ECO:0000303"/>
    <property type="project" value="ComplexPortal"/>
</dbReference>
<dbReference type="GO" id="GO:0016192">
    <property type="term" value="P:vesicle-mediated transport"/>
    <property type="evidence" value="ECO:0000304"/>
    <property type="project" value="MGI"/>
</dbReference>
<dbReference type="Gene3D" id="1.25.10.10">
    <property type="entry name" value="Leucine-rich Repeat Variant"/>
    <property type="match status" value="1"/>
</dbReference>
<dbReference type="InterPro" id="IPR026740">
    <property type="entry name" value="AP3_beta"/>
</dbReference>
<dbReference type="InterPro" id="IPR056314">
    <property type="entry name" value="AP3B1/2_C"/>
</dbReference>
<dbReference type="InterPro" id="IPR029390">
    <property type="entry name" value="AP3B_C"/>
</dbReference>
<dbReference type="InterPro" id="IPR026739">
    <property type="entry name" value="AP_beta"/>
</dbReference>
<dbReference type="InterPro" id="IPR011989">
    <property type="entry name" value="ARM-like"/>
</dbReference>
<dbReference type="InterPro" id="IPR016024">
    <property type="entry name" value="ARM-type_fold"/>
</dbReference>
<dbReference type="InterPro" id="IPR002553">
    <property type="entry name" value="Clathrin/coatomer_adapt-like_N"/>
</dbReference>
<dbReference type="InterPro" id="IPR013041">
    <property type="entry name" value="Clathrin_app_Ig-like_sf"/>
</dbReference>
<dbReference type="PANTHER" id="PTHR11134">
    <property type="entry name" value="ADAPTOR COMPLEX SUBUNIT BETA FAMILY MEMBER"/>
    <property type="match status" value="1"/>
</dbReference>
<dbReference type="Pfam" id="PF01602">
    <property type="entry name" value="Adaptin_N"/>
    <property type="match status" value="1"/>
</dbReference>
<dbReference type="Pfam" id="PF14796">
    <property type="entry name" value="AP3B1_C"/>
    <property type="match status" value="1"/>
</dbReference>
<dbReference type="Pfam" id="PF24080">
    <property type="entry name" value="AP3B1_C_2"/>
    <property type="match status" value="1"/>
</dbReference>
<dbReference type="PIRSF" id="PIRSF037096">
    <property type="entry name" value="AP3_complex_beta"/>
    <property type="match status" value="1"/>
</dbReference>
<dbReference type="SMART" id="SM01355">
    <property type="entry name" value="AP3B1_C"/>
    <property type="match status" value="1"/>
</dbReference>
<dbReference type="SUPFAM" id="SSF48371">
    <property type="entry name" value="ARM repeat"/>
    <property type="match status" value="1"/>
</dbReference>
<dbReference type="SUPFAM" id="SSF49348">
    <property type="entry name" value="Clathrin adaptor appendage domain"/>
    <property type="match status" value="1"/>
</dbReference>
<protein>
    <recommendedName>
        <fullName>AP-3 complex subunit beta-2</fullName>
    </recommendedName>
    <alternativeName>
        <fullName>Adaptor protein complex AP-3 subunit beta-2</fullName>
    </alternativeName>
    <alternativeName>
        <fullName>Adaptor-related protein complex 3 subunit beta-2</fullName>
    </alternativeName>
    <alternativeName>
        <fullName>Beta-3B-adaptin</fullName>
    </alternativeName>
    <alternativeName>
        <fullName>Clathrin assembly protein complex 3 beta-2 large chain</fullName>
    </alternativeName>
</protein>